<reference key="1">
    <citation type="journal article" date="2003" name="Mol. Microbiol.">
        <title>Genome-based analysis of virulence genes in a non-biofilm-forming Staphylococcus epidermidis strain (ATCC 12228).</title>
        <authorList>
            <person name="Zhang Y.-Q."/>
            <person name="Ren S.-X."/>
            <person name="Li H.-L."/>
            <person name="Wang Y.-X."/>
            <person name="Fu G."/>
            <person name="Yang J."/>
            <person name="Qin Z.-Q."/>
            <person name="Miao Y.-G."/>
            <person name="Wang W.-Y."/>
            <person name="Chen R.-S."/>
            <person name="Shen Y."/>
            <person name="Chen Z."/>
            <person name="Yuan Z.-H."/>
            <person name="Zhao G.-P."/>
            <person name="Qu D."/>
            <person name="Danchin A."/>
            <person name="Wen Y.-M."/>
        </authorList>
    </citation>
    <scope>NUCLEOTIDE SEQUENCE [LARGE SCALE GENOMIC DNA]</scope>
    <source>
        <strain>ATCC 12228 / FDA PCI 1200</strain>
    </source>
</reference>
<accession>Q8CRJ3</accession>
<organism>
    <name type="scientific">Staphylococcus epidermidis (strain ATCC 12228 / FDA PCI 1200)</name>
    <dbReference type="NCBI Taxonomy" id="176280"/>
    <lineage>
        <taxon>Bacteria</taxon>
        <taxon>Bacillati</taxon>
        <taxon>Bacillota</taxon>
        <taxon>Bacilli</taxon>
        <taxon>Bacillales</taxon>
        <taxon>Staphylococcaceae</taxon>
        <taxon>Staphylococcus</taxon>
    </lineage>
</organism>
<sequence length="171" mass="18903">MKIAIGCDHIVTDTKMEVSQHLKSQGHEVIDVGTYDFTRTHYPIYGKKVGEKVASGEADLGVCICGTGVGISNAANKVPGVRTALVRDMTSALYSKEELNANVVSFGGKVAGELFIFDIVDAFIEAEYKPTEENKKLIAKINHLEAHNNDQADPHFFDEFLEKWNKGEYHD</sequence>
<evidence type="ECO:0000255" key="1">
    <source>
        <dbReference type="HAMAP-Rule" id="MF_01556"/>
    </source>
</evidence>
<gene>
    <name evidence="1" type="primary">lacB</name>
    <name type="ordered locus">SE_1786</name>
</gene>
<keyword id="KW-0413">Isomerase</keyword>
<keyword id="KW-0423">Lactose metabolism</keyword>
<proteinExistence type="inferred from homology"/>
<protein>
    <recommendedName>
        <fullName evidence="1">Galactose-6-phosphate isomerase subunit LacB</fullName>
        <ecNumber evidence="1">5.3.1.26</ecNumber>
    </recommendedName>
</protein>
<name>LACB_STAES</name>
<comment type="catalytic activity">
    <reaction evidence="1">
        <text>aldehydo-D-galactose 6-phosphate = keto-D-tagatose 6-phosphate</text>
        <dbReference type="Rhea" id="RHEA:13033"/>
        <dbReference type="ChEBI" id="CHEBI:58255"/>
        <dbReference type="ChEBI" id="CHEBI:134283"/>
        <dbReference type="EC" id="5.3.1.26"/>
    </reaction>
</comment>
<comment type="pathway">
    <text evidence="1">Carbohydrate metabolism; D-galactose 6-phosphate degradation; D-tagatose 6-phosphate from D-galactose 6-phosphate: step 1/1.</text>
</comment>
<comment type="subunit">
    <text evidence="1">Heteromultimeric protein consisting of LacA and LacB.</text>
</comment>
<comment type="similarity">
    <text evidence="1">Belongs to the LacAB/RpiB family.</text>
</comment>
<feature type="chain" id="PRO_0000208143" description="Galactose-6-phosphate isomerase subunit LacB">
    <location>
        <begin position="1"/>
        <end position="171"/>
    </location>
</feature>
<dbReference type="EC" id="5.3.1.26" evidence="1"/>
<dbReference type="EMBL" id="AE015929">
    <property type="protein sequence ID" value="AAO05427.1"/>
    <property type="molecule type" value="Genomic_DNA"/>
</dbReference>
<dbReference type="RefSeq" id="NP_765341.1">
    <property type="nucleotide sequence ID" value="NC_004461.1"/>
</dbReference>
<dbReference type="RefSeq" id="WP_001829777.1">
    <property type="nucleotide sequence ID" value="NZ_WBME01000007.1"/>
</dbReference>
<dbReference type="SMR" id="Q8CRJ3"/>
<dbReference type="GeneID" id="50018110"/>
<dbReference type="KEGG" id="sep:SE_1786"/>
<dbReference type="PATRIC" id="fig|176280.10.peg.1743"/>
<dbReference type="eggNOG" id="COG0698">
    <property type="taxonomic scope" value="Bacteria"/>
</dbReference>
<dbReference type="HOGENOM" id="CLU_091396_2_0_9"/>
<dbReference type="OrthoDB" id="1778624at2"/>
<dbReference type="UniPathway" id="UPA00702">
    <property type="reaction ID" value="UER00714"/>
</dbReference>
<dbReference type="Proteomes" id="UP000001411">
    <property type="component" value="Chromosome"/>
</dbReference>
<dbReference type="GO" id="GO:0050044">
    <property type="term" value="F:galactose-6-phosphate isomerase activity"/>
    <property type="evidence" value="ECO:0007669"/>
    <property type="project" value="UniProtKB-UniRule"/>
</dbReference>
<dbReference type="GO" id="GO:0004751">
    <property type="term" value="F:ribose-5-phosphate isomerase activity"/>
    <property type="evidence" value="ECO:0007669"/>
    <property type="project" value="TreeGrafter"/>
</dbReference>
<dbReference type="GO" id="GO:0019316">
    <property type="term" value="P:D-allose catabolic process"/>
    <property type="evidence" value="ECO:0007669"/>
    <property type="project" value="TreeGrafter"/>
</dbReference>
<dbReference type="GO" id="GO:0019388">
    <property type="term" value="P:galactose catabolic process"/>
    <property type="evidence" value="ECO:0007669"/>
    <property type="project" value="UniProtKB-UniPathway"/>
</dbReference>
<dbReference type="GO" id="GO:0019512">
    <property type="term" value="P:lactose catabolic process via tagatose-6-phosphate"/>
    <property type="evidence" value="ECO:0007669"/>
    <property type="project" value="UniProtKB-UniRule"/>
</dbReference>
<dbReference type="GO" id="GO:0009052">
    <property type="term" value="P:pentose-phosphate shunt, non-oxidative branch"/>
    <property type="evidence" value="ECO:0007669"/>
    <property type="project" value="TreeGrafter"/>
</dbReference>
<dbReference type="Gene3D" id="3.40.1400.10">
    <property type="entry name" value="Sugar-phosphate isomerase, RpiB/LacA/LacB"/>
    <property type="match status" value="1"/>
</dbReference>
<dbReference type="HAMAP" id="MF_01556">
    <property type="entry name" value="LacB"/>
    <property type="match status" value="1"/>
</dbReference>
<dbReference type="InterPro" id="IPR004784">
    <property type="entry name" value="LacB"/>
</dbReference>
<dbReference type="InterPro" id="IPR003500">
    <property type="entry name" value="RpiB_LacA_LacB"/>
</dbReference>
<dbReference type="InterPro" id="IPR036569">
    <property type="entry name" value="RpiB_LacA_LacB_sf"/>
</dbReference>
<dbReference type="NCBIfam" id="TIGR01119">
    <property type="entry name" value="lacB"/>
    <property type="match status" value="1"/>
</dbReference>
<dbReference type="NCBIfam" id="NF004051">
    <property type="entry name" value="PRK05571.1"/>
    <property type="match status" value="1"/>
</dbReference>
<dbReference type="NCBIfam" id="NF006381">
    <property type="entry name" value="PRK08622.1"/>
    <property type="match status" value="1"/>
</dbReference>
<dbReference type="NCBIfam" id="TIGR00689">
    <property type="entry name" value="rpiB_lacA_lacB"/>
    <property type="match status" value="1"/>
</dbReference>
<dbReference type="PANTHER" id="PTHR30345:SF0">
    <property type="entry name" value="DNA DAMAGE-REPAIR_TOLERATION PROTEIN DRT102"/>
    <property type="match status" value="1"/>
</dbReference>
<dbReference type="PANTHER" id="PTHR30345">
    <property type="entry name" value="RIBOSE-5-PHOSPHATE ISOMERASE B"/>
    <property type="match status" value="1"/>
</dbReference>
<dbReference type="Pfam" id="PF02502">
    <property type="entry name" value="LacAB_rpiB"/>
    <property type="match status" value="1"/>
</dbReference>
<dbReference type="PIRSF" id="PIRSF005384">
    <property type="entry name" value="RpiB_LacA_B"/>
    <property type="match status" value="1"/>
</dbReference>
<dbReference type="SUPFAM" id="SSF89623">
    <property type="entry name" value="Ribose/Galactose isomerase RpiB/AlsB"/>
    <property type="match status" value="1"/>
</dbReference>